<organism>
    <name type="scientific">Escherichia coli (strain B / BL21-DE3)</name>
    <dbReference type="NCBI Taxonomy" id="469008"/>
    <lineage>
        <taxon>Bacteria</taxon>
        <taxon>Pseudomonadati</taxon>
        <taxon>Pseudomonadota</taxon>
        <taxon>Gammaproteobacteria</taxon>
        <taxon>Enterobacterales</taxon>
        <taxon>Enterobacteriaceae</taxon>
        <taxon>Escherichia</taxon>
    </lineage>
</organism>
<name>RUTA_ECOBD</name>
<feature type="chain" id="PRO_0000402597" description="Pyrimidine monooxygenase RutA">
    <location>
        <begin position="1"/>
        <end position="382"/>
    </location>
</feature>
<feature type="binding site" evidence="1">
    <location>
        <begin position="68"/>
        <end position="69"/>
    </location>
    <ligand>
        <name>FMN</name>
        <dbReference type="ChEBI" id="CHEBI:58210"/>
    </ligand>
</feature>
<feature type="binding site" evidence="1">
    <location>
        <position position="134"/>
    </location>
    <ligand>
        <name>FMN</name>
        <dbReference type="ChEBI" id="CHEBI:58210"/>
    </ligand>
</feature>
<feature type="binding site" evidence="1">
    <location>
        <position position="143"/>
    </location>
    <ligand>
        <name>FMN</name>
        <dbReference type="ChEBI" id="CHEBI:58210"/>
    </ligand>
</feature>
<feature type="binding site" evidence="1">
    <location>
        <begin position="159"/>
        <end position="160"/>
    </location>
    <ligand>
        <name>FMN</name>
        <dbReference type="ChEBI" id="CHEBI:58210"/>
    </ligand>
</feature>
<feature type="binding site" evidence="1">
    <location>
        <position position="209"/>
    </location>
    <ligand>
        <name>FMN</name>
        <dbReference type="ChEBI" id="CHEBI:58210"/>
    </ligand>
</feature>
<proteinExistence type="inferred from homology"/>
<sequence>MQDAVPRLTFTLRDEERLMMKIGVFVPIGNNGWLISTHAPQYMPTFELNKAIVQKAEHYHFDFALSMIKLRGFGGKTEFWDHNLESFTLMAGLAAVTSRIQIYATAATLTLPPAIVARMAATIDSISGGRFGVNLVTGWQKPEYEQMGIWPGDDYFSRRYDYLTEYVQVLRDLWGTGKSDFKGDFFTMNDCRVSPQPSVPMKVICAGQSDAGMAFSAQYADFNFCFGKGVNTPTAFAPTAARMKQAAEQTGRDVGSYVLFMVIADETDDAARAKWEHYKAGADEEALSWLTEQSQKDTRSGTDTNVRQMADPTSAVNINMGTLVGSYASVARMLDEVASVPGAEGVLLTFDDFLSGIETFGERIQPLMQCRAHLPVLTQEVA</sequence>
<protein>
    <recommendedName>
        <fullName evidence="1">Pyrimidine monooxygenase RutA</fullName>
        <ecNumber evidence="1">1.14.99.46</ecNumber>
    </recommendedName>
</protein>
<accession>C6EHJ5</accession>
<accession>C5W2X1</accession>
<accession>C6VAU0</accession>
<gene>
    <name evidence="1" type="primary">rutA</name>
    <name type="ordered locus">ECBD_2582</name>
    <name type="ordered locus">ECD_01015</name>
    <name type="ordered locus">B21_01022</name>
</gene>
<comment type="function">
    <text evidence="1">Catalyzes the pyrimidine ring opening between N-3 and C-4 by an unusual flavin hydroperoxide-catalyzed mechanism, adding oxygen atoms in the process to yield ureidoacrylate peracid, that immediately reacts with FMN forming ureidoacrylate and FMN-N(5)-oxide. The FMN-N(5)-oxide reacts spontaneously with NADH to produce FMN. Requires the flavin reductase RutF to regenerate FMN in vivo.</text>
</comment>
<comment type="catalytic activity">
    <reaction evidence="1">
        <text>uracil + FMNH2 + NADH + O2 = (Z)-3-ureidoacrylate + FMN + NAD(+) + H2O + H(+)</text>
        <dbReference type="Rhea" id="RHEA:31587"/>
        <dbReference type="ChEBI" id="CHEBI:15377"/>
        <dbReference type="ChEBI" id="CHEBI:15378"/>
        <dbReference type="ChEBI" id="CHEBI:15379"/>
        <dbReference type="ChEBI" id="CHEBI:17568"/>
        <dbReference type="ChEBI" id="CHEBI:57540"/>
        <dbReference type="ChEBI" id="CHEBI:57618"/>
        <dbReference type="ChEBI" id="CHEBI:57945"/>
        <dbReference type="ChEBI" id="CHEBI:58210"/>
        <dbReference type="ChEBI" id="CHEBI:59891"/>
        <dbReference type="EC" id="1.14.99.46"/>
    </reaction>
</comment>
<comment type="catalytic activity">
    <reaction evidence="1">
        <text>thymine + FMNH2 + NADH + O2 = (Z)-2-methylureidoacrylate + FMN + NAD(+) + H2O + H(+)</text>
        <dbReference type="Rhea" id="RHEA:31599"/>
        <dbReference type="ChEBI" id="CHEBI:15377"/>
        <dbReference type="ChEBI" id="CHEBI:15378"/>
        <dbReference type="ChEBI" id="CHEBI:15379"/>
        <dbReference type="ChEBI" id="CHEBI:17821"/>
        <dbReference type="ChEBI" id="CHEBI:57540"/>
        <dbReference type="ChEBI" id="CHEBI:57618"/>
        <dbReference type="ChEBI" id="CHEBI:57945"/>
        <dbReference type="ChEBI" id="CHEBI:58210"/>
        <dbReference type="ChEBI" id="CHEBI:143783"/>
        <dbReference type="EC" id="1.14.99.46"/>
    </reaction>
</comment>
<comment type="induction">
    <text evidence="1">Up-regulated by the nitrogen regulatory protein C (NtrC also called GlnG) and repressed by RutR.</text>
</comment>
<comment type="similarity">
    <text evidence="1">Belongs to the NtaA/SnaA/DszA monooxygenase family. RutA subfamily.</text>
</comment>
<comment type="sequence caution" evidence="2">
    <conflict type="erroneous initiation">
        <sequence resource="EMBL-CDS" id="ACT29604"/>
    </conflict>
    <text>Truncated N-terminus.</text>
</comment>
<comment type="sequence caution" evidence="2">
    <conflict type="erroneous initiation">
        <sequence resource="EMBL-CDS" id="ACT42910"/>
    </conflict>
    <text>Truncated N-terminus.</text>
</comment>
<reference key="1">
    <citation type="submission" date="2009-06" db="EMBL/GenBank/DDBJ databases">
        <title>Sequencing and gene expression analysis of Escherichia coli BL21.</title>
        <authorList>
            <person name="Leparc G."/>
            <person name="Striedner G."/>
            <person name="Bayer K."/>
            <person name="Kreil D."/>
            <person name="Krempl P.M."/>
        </authorList>
    </citation>
    <scope>NUCLEOTIDE SEQUENCE [LARGE SCALE GENOMIC DNA]</scope>
    <source>
        <strain>B / BL21-DE3</strain>
    </source>
</reference>
<reference key="2">
    <citation type="submission" date="2009-07" db="EMBL/GenBank/DDBJ databases">
        <title>Complete sequence of Escherichia coli BL21(DE3).</title>
        <authorList>
            <person name="Lucas S."/>
            <person name="Copeland A."/>
            <person name="Lapidus A."/>
            <person name="Glavina del Rio T."/>
            <person name="Dalin E."/>
            <person name="Tice H."/>
            <person name="Bruce D."/>
            <person name="Goodwin L."/>
            <person name="Pitluck S."/>
            <person name="LaButti K.M."/>
            <person name="Clum A."/>
            <person name="Larimer F."/>
            <person name="Land M."/>
            <person name="Hauser L."/>
            <person name="Kyrpides N."/>
            <person name="Anderson I."/>
            <person name="Sorek R."/>
            <person name="Rubin E."/>
        </authorList>
    </citation>
    <scope>NUCLEOTIDE SEQUENCE [LARGE SCALE GENOMIC DNA]</scope>
    <source>
        <strain>B / BL21-DE3</strain>
    </source>
</reference>
<reference key="3">
    <citation type="journal article" date="2009" name="J. Mol. Biol.">
        <title>Genome sequences of Escherichia coli B strains REL606 and BL21(DE3).</title>
        <authorList>
            <person name="Jeong H."/>
            <person name="Barbe V."/>
            <person name="Lee C.H."/>
            <person name="Vallenet D."/>
            <person name="Yu D.S."/>
            <person name="Choi S.H."/>
            <person name="Couloux A."/>
            <person name="Lee S.W."/>
            <person name="Yoon S.H."/>
            <person name="Cattolico L."/>
            <person name="Hur C.G."/>
            <person name="Park H.S."/>
            <person name="Segurens B."/>
            <person name="Kim S.C."/>
            <person name="Oh T.K."/>
            <person name="Lenski R.E."/>
            <person name="Studier F.W."/>
            <person name="Daegelen P."/>
            <person name="Kim J.F."/>
        </authorList>
    </citation>
    <scope>NUCLEOTIDE SEQUENCE [LARGE SCALE GENOMIC DNA]</scope>
    <source>
        <strain>B / BL21-DE3</strain>
    </source>
</reference>
<dbReference type="EC" id="1.14.99.46" evidence="1"/>
<dbReference type="EMBL" id="AM946981">
    <property type="protein sequence ID" value="CAQ31539.1"/>
    <property type="molecule type" value="Genomic_DNA"/>
</dbReference>
<dbReference type="EMBL" id="CP001665">
    <property type="protein sequence ID" value="ACT29604.1"/>
    <property type="status" value="ALT_INIT"/>
    <property type="molecule type" value="Genomic_DNA"/>
</dbReference>
<dbReference type="EMBL" id="CP001509">
    <property type="protein sequence ID" value="ACT42910.1"/>
    <property type="status" value="ALT_INIT"/>
    <property type="molecule type" value="Genomic_DNA"/>
</dbReference>
<dbReference type="SMR" id="C6EHJ5"/>
<dbReference type="KEGG" id="ebd:ECBD_2582"/>
<dbReference type="KEGG" id="ebe:B21_01022"/>
<dbReference type="KEGG" id="ebl:ECD_01015"/>
<dbReference type="PATRIC" id="fig|469008.15.peg.1037"/>
<dbReference type="eggNOG" id="COG2141">
    <property type="taxonomic scope" value="Bacteria"/>
</dbReference>
<dbReference type="HOGENOM" id="CLU_027853_1_1_6"/>
<dbReference type="GO" id="GO:0008726">
    <property type="term" value="F:alkanesulfonate monooxygenase activity"/>
    <property type="evidence" value="ECO:0007669"/>
    <property type="project" value="TreeGrafter"/>
</dbReference>
<dbReference type="GO" id="GO:0052614">
    <property type="term" value="F:uracil oxygenase activity"/>
    <property type="evidence" value="ECO:0007669"/>
    <property type="project" value="UniProtKB-EC"/>
</dbReference>
<dbReference type="GO" id="GO:0046306">
    <property type="term" value="P:alkanesulfonate catabolic process"/>
    <property type="evidence" value="ECO:0007669"/>
    <property type="project" value="TreeGrafter"/>
</dbReference>
<dbReference type="GO" id="GO:0019740">
    <property type="term" value="P:nitrogen utilization"/>
    <property type="evidence" value="ECO:0007669"/>
    <property type="project" value="UniProtKB-UniRule"/>
</dbReference>
<dbReference type="GO" id="GO:0006212">
    <property type="term" value="P:uracil catabolic process"/>
    <property type="evidence" value="ECO:0007669"/>
    <property type="project" value="UniProtKB-UniRule"/>
</dbReference>
<dbReference type="CDD" id="cd01094">
    <property type="entry name" value="Alkanesulfonate_monoxygenase"/>
    <property type="match status" value="1"/>
</dbReference>
<dbReference type="FunFam" id="3.20.20.30:FF:000003">
    <property type="entry name" value="Pyrimidine monooxygenase RutA"/>
    <property type="match status" value="1"/>
</dbReference>
<dbReference type="Gene3D" id="3.20.20.30">
    <property type="entry name" value="Luciferase-like domain"/>
    <property type="match status" value="1"/>
</dbReference>
<dbReference type="HAMAP" id="MF_01699">
    <property type="entry name" value="RutA"/>
    <property type="match status" value="1"/>
</dbReference>
<dbReference type="InterPro" id="IPR011251">
    <property type="entry name" value="Luciferase-like_dom"/>
</dbReference>
<dbReference type="InterPro" id="IPR036661">
    <property type="entry name" value="Luciferase-like_sf"/>
</dbReference>
<dbReference type="InterPro" id="IPR019914">
    <property type="entry name" value="Pyrimidine_monooxygenase_RutA"/>
</dbReference>
<dbReference type="InterPro" id="IPR050172">
    <property type="entry name" value="SsuD_RutA_monooxygenase"/>
</dbReference>
<dbReference type="NCBIfam" id="TIGR03612">
    <property type="entry name" value="RutA"/>
    <property type="match status" value="1"/>
</dbReference>
<dbReference type="PANTHER" id="PTHR42847">
    <property type="entry name" value="ALKANESULFONATE MONOOXYGENASE"/>
    <property type="match status" value="1"/>
</dbReference>
<dbReference type="PANTHER" id="PTHR42847:SF4">
    <property type="entry name" value="ALKANESULFONATE MONOOXYGENASE-RELATED"/>
    <property type="match status" value="1"/>
</dbReference>
<dbReference type="Pfam" id="PF00296">
    <property type="entry name" value="Bac_luciferase"/>
    <property type="match status" value="1"/>
</dbReference>
<dbReference type="SUPFAM" id="SSF51679">
    <property type="entry name" value="Bacterial luciferase-like"/>
    <property type="match status" value="1"/>
</dbReference>
<keyword id="KW-0285">Flavoprotein</keyword>
<keyword id="KW-0288">FMN</keyword>
<keyword id="KW-0503">Monooxygenase</keyword>
<keyword id="KW-0521">NADP</keyword>
<keyword id="KW-0560">Oxidoreductase</keyword>
<evidence type="ECO:0000255" key="1">
    <source>
        <dbReference type="HAMAP-Rule" id="MF_01699"/>
    </source>
</evidence>
<evidence type="ECO:0000305" key="2"/>